<feature type="chain" id="PRO_1000009901" description="Uracil-DNA glycosylase">
    <location>
        <begin position="1"/>
        <end position="229"/>
    </location>
</feature>
<feature type="active site" description="Proton acceptor" evidence="1">
    <location>
        <position position="64"/>
    </location>
</feature>
<gene>
    <name evidence="1" type="primary">ung</name>
    <name type="ordered locus">KPN78578_28520</name>
    <name type="ORF">KPN_02903</name>
</gene>
<comment type="function">
    <text evidence="1">Excises uracil residues from the DNA which can arise as a result of misincorporation of dUMP residues by DNA polymerase or due to deamination of cytosine.</text>
</comment>
<comment type="catalytic activity">
    <reaction evidence="1">
        <text>Hydrolyzes single-stranded DNA or mismatched double-stranded DNA and polynucleotides, releasing free uracil.</text>
        <dbReference type="EC" id="3.2.2.27"/>
    </reaction>
</comment>
<comment type="subcellular location">
    <subcellularLocation>
        <location evidence="1">Cytoplasm</location>
    </subcellularLocation>
</comment>
<comment type="similarity">
    <text evidence="1">Belongs to the uracil-DNA glycosylase (UDG) superfamily. UNG family.</text>
</comment>
<proteinExistence type="inferred from homology"/>
<sequence>MTTPLTWHDVLADEKQQPYFLNTLKTVAEERQSGITIYPPQKDVFNAFRFTELGDVKVVILGQDPYHGPGQAHGLAFSVRPGVAIPPSLLNMYKELEATIPGFTRPTHGYLESWARQGVLLLNTVLTVRAGQAHSHASLGWETFTDKVIALINEHCEGVVFLLWGSHAQKKGAIIDRQRHCVLKAPHPSPLSAHRGFFGCNHFVQTNQWLVDRGETPIDWMPVLPAESE</sequence>
<name>UNG_KLEP7</name>
<dbReference type="EC" id="3.2.2.27" evidence="1"/>
<dbReference type="EMBL" id="CP000647">
    <property type="protein sequence ID" value="ABR78313.1"/>
    <property type="molecule type" value="Genomic_DNA"/>
</dbReference>
<dbReference type="RefSeq" id="WP_002914088.1">
    <property type="nucleotide sequence ID" value="NC_009648.1"/>
</dbReference>
<dbReference type="SMR" id="A6TCJ2"/>
<dbReference type="STRING" id="272620.KPN_02903"/>
<dbReference type="PaxDb" id="272620-KPN_02903"/>
<dbReference type="EnsemblBacteria" id="ABR78313">
    <property type="protein sequence ID" value="ABR78313"/>
    <property type="gene ID" value="KPN_02903"/>
</dbReference>
<dbReference type="KEGG" id="kpn:KPN_02903"/>
<dbReference type="HOGENOM" id="CLU_032162_3_0_6"/>
<dbReference type="Proteomes" id="UP000000265">
    <property type="component" value="Chromosome"/>
</dbReference>
<dbReference type="GO" id="GO:0005737">
    <property type="term" value="C:cytoplasm"/>
    <property type="evidence" value="ECO:0007669"/>
    <property type="project" value="UniProtKB-SubCell"/>
</dbReference>
<dbReference type="GO" id="GO:0004844">
    <property type="term" value="F:uracil DNA N-glycosylase activity"/>
    <property type="evidence" value="ECO:0007669"/>
    <property type="project" value="UniProtKB-UniRule"/>
</dbReference>
<dbReference type="GO" id="GO:0097510">
    <property type="term" value="P:base-excision repair, AP site formation via deaminated base removal"/>
    <property type="evidence" value="ECO:0007669"/>
    <property type="project" value="TreeGrafter"/>
</dbReference>
<dbReference type="CDD" id="cd10027">
    <property type="entry name" value="UDG-F1-like"/>
    <property type="match status" value="1"/>
</dbReference>
<dbReference type="FunFam" id="3.40.470.10:FF:000001">
    <property type="entry name" value="Uracil-DNA glycosylase"/>
    <property type="match status" value="1"/>
</dbReference>
<dbReference type="Gene3D" id="3.40.470.10">
    <property type="entry name" value="Uracil-DNA glycosylase-like domain"/>
    <property type="match status" value="1"/>
</dbReference>
<dbReference type="HAMAP" id="MF_00148">
    <property type="entry name" value="UDG"/>
    <property type="match status" value="1"/>
</dbReference>
<dbReference type="InterPro" id="IPR002043">
    <property type="entry name" value="UDG_fam1"/>
</dbReference>
<dbReference type="InterPro" id="IPR018085">
    <property type="entry name" value="Ura-DNA_Glyclase_AS"/>
</dbReference>
<dbReference type="InterPro" id="IPR005122">
    <property type="entry name" value="Uracil-DNA_glycosylase-like"/>
</dbReference>
<dbReference type="InterPro" id="IPR036895">
    <property type="entry name" value="Uracil-DNA_glycosylase-like_sf"/>
</dbReference>
<dbReference type="NCBIfam" id="NF003588">
    <property type="entry name" value="PRK05254.1-1"/>
    <property type="match status" value="1"/>
</dbReference>
<dbReference type="NCBIfam" id="NF003589">
    <property type="entry name" value="PRK05254.1-2"/>
    <property type="match status" value="1"/>
</dbReference>
<dbReference type="NCBIfam" id="NF003591">
    <property type="entry name" value="PRK05254.1-4"/>
    <property type="match status" value="1"/>
</dbReference>
<dbReference type="NCBIfam" id="NF003592">
    <property type="entry name" value="PRK05254.1-5"/>
    <property type="match status" value="1"/>
</dbReference>
<dbReference type="NCBIfam" id="TIGR00628">
    <property type="entry name" value="ung"/>
    <property type="match status" value="1"/>
</dbReference>
<dbReference type="PANTHER" id="PTHR11264">
    <property type="entry name" value="URACIL-DNA GLYCOSYLASE"/>
    <property type="match status" value="1"/>
</dbReference>
<dbReference type="PANTHER" id="PTHR11264:SF0">
    <property type="entry name" value="URACIL-DNA GLYCOSYLASE"/>
    <property type="match status" value="1"/>
</dbReference>
<dbReference type="Pfam" id="PF03167">
    <property type="entry name" value="UDG"/>
    <property type="match status" value="1"/>
</dbReference>
<dbReference type="SMART" id="SM00986">
    <property type="entry name" value="UDG"/>
    <property type="match status" value="1"/>
</dbReference>
<dbReference type="SMART" id="SM00987">
    <property type="entry name" value="UreE_C"/>
    <property type="match status" value="1"/>
</dbReference>
<dbReference type="SUPFAM" id="SSF52141">
    <property type="entry name" value="Uracil-DNA glycosylase-like"/>
    <property type="match status" value="1"/>
</dbReference>
<dbReference type="PROSITE" id="PS00130">
    <property type="entry name" value="U_DNA_GLYCOSYLASE"/>
    <property type="match status" value="1"/>
</dbReference>
<protein>
    <recommendedName>
        <fullName evidence="1">Uracil-DNA glycosylase</fullName>
        <shortName evidence="1">UDG</shortName>
        <ecNumber evidence="1">3.2.2.27</ecNumber>
    </recommendedName>
</protein>
<organism>
    <name type="scientific">Klebsiella pneumoniae subsp. pneumoniae (strain ATCC 700721 / MGH 78578)</name>
    <dbReference type="NCBI Taxonomy" id="272620"/>
    <lineage>
        <taxon>Bacteria</taxon>
        <taxon>Pseudomonadati</taxon>
        <taxon>Pseudomonadota</taxon>
        <taxon>Gammaproteobacteria</taxon>
        <taxon>Enterobacterales</taxon>
        <taxon>Enterobacteriaceae</taxon>
        <taxon>Klebsiella/Raoultella group</taxon>
        <taxon>Klebsiella</taxon>
        <taxon>Klebsiella pneumoniae complex</taxon>
    </lineage>
</organism>
<keyword id="KW-0963">Cytoplasm</keyword>
<keyword id="KW-0227">DNA damage</keyword>
<keyword id="KW-0234">DNA repair</keyword>
<keyword id="KW-0378">Hydrolase</keyword>
<reference key="1">
    <citation type="submission" date="2006-09" db="EMBL/GenBank/DDBJ databases">
        <authorList>
            <consortium name="The Klebsiella pneumonia Genome Sequencing Project"/>
            <person name="McClelland M."/>
            <person name="Sanderson E.K."/>
            <person name="Spieth J."/>
            <person name="Clifton W.S."/>
            <person name="Latreille P."/>
            <person name="Sabo A."/>
            <person name="Pepin K."/>
            <person name="Bhonagiri V."/>
            <person name="Porwollik S."/>
            <person name="Ali J."/>
            <person name="Wilson R.K."/>
        </authorList>
    </citation>
    <scope>NUCLEOTIDE SEQUENCE [LARGE SCALE GENOMIC DNA]</scope>
    <source>
        <strain>ATCC 700721 / MGH 78578</strain>
    </source>
</reference>
<evidence type="ECO:0000255" key="1">
    <source>
        <dbReference type="HAMAP-Rule" id="MF_00148"/>
    </source>
</evidence>
<accession>A6TCJ2</accession>